<organism>
    <name type="scientific">Yersinia enterocolitica</name>
    <dbReference type="NCBI Taxonomy" id="630"/>
    <lineage>
        <taxon>Bacteria</taxon>
        <taxon>Pseudomonadati</taxon>
        <taxon>Pseudomonadota</taxon>
        <taxon>Gammaproteobacteria</taxon>
        <taxon>Enterobacterales</taxon>
        <taxon>Yersiniaceae</taxon>
        <taxon>Yersinia</taxon>
    </lineage>
</organism>
<feature type="signal peptide" evidence="3">
    <location>
        <begin position="1"/>
        <end position="18"/>
    </location>
</feature>
<feature type="chain" id="PRO_0000018230" description="Yop proteins translocation lipoprotein J">
    <location>
        <begin position="19"/>
        <end position="244"/>
    </location>
</feature>
<feature type="transmembrane region" description="Helical" evidence="1">
    <location>
        <begin position="218"/>
        <end position="238"/>
    </location>
</feature>
<feature type="lipid moiety-binding region" description="N-palmitoyl cysteine" evidence="2">
    <location>
        <position position="19"/>
    </location>
</feature>
<feature type="lipid moiety-binding region" description="S-diacylglycerol cysteine" evidence="2">
    <location>
        <position position="19"/>
    </location>
</feature>
<reference key="1">
    <citation type="journal article" date="1991" name="J. Bacteriol.">
        <title>Analysis of virC, an operon involved in the secretion of Yop proteins by Yersinia enterocolitica.</title>
        <authorList>
            <person name="Michiels T."/>
            <person name="Vanooteghem J.-C."/>
            <person name="de Rouvroit C."/>
            <person name="China B."/>
            <person name="Gustin A."/>
            <person name="Boudry P."/>
            <person name="Cornelis G.R."/>
        </authorList>
    </citation>
    <scope>NUCLEOTIDE SEQUENCE [GENOMIC DNA]</scope>
    <source>
        <strain>439-80 / Serotype O:9</strain>
    </source>
</reference>
<name>YSCJ_YEREN</name>
<protein>
    <recommendedName>
        <fullName>Yop proteins translocation lipoprotein J</fullName>
    </recommendedName>
    <alternativeName>
        <fullName>Lipoprotein YlpB</fullName>
    </alternativeName>
</protein>
<sequence length="244" mass="27061">MKVKTSLSTLILILFLTGCKVDLYTGISQKEGNEMLALLRQEGLSADKEPDKDGKIKLLVEESDVAQAIDILKRKGYPHESFSTLQDVFPKDGLISSPIEELARLNYAKAQEISRTLSEIDGVLVARVHVVLPEEQNNKGKKGVAASASVFIKHAADIQFDTYIPQIKQLVNNSIEGLAYDRISVILVPSVDVRQSSHLPRNTSILSIQVSEESKGRLIGLLSLLILLLPVTNLAQYFWLQRKK</sequence>
<evidence type="ECO:0000255" key="1"/>
<evidence type="ECO:0000255" key="2">
    <source>
        <dbReference type="PROSITE-ProRule" id="PRU00303"/>
    </source>
</evidence>
<evidence type="ECO:0000305" key="3"/>
<accession>Q01251</accession>
<dbReference type="EMBL" id="M74011">
    <property type="protein sequence ID" value="AAC37027.1"/>
    <property type="molecule type" value="Genomic_DNA"/>
</dbReference>
<dbReference type="PIR" id="A40049">
    <property type="entry name" value="A40049"/>
</dbReference>
<dbReference type="RefSeq" id="NP_783695.1">
    <property type="nucleotide sequence ID" value="NC_004564.1"/>
</dbReference>
<dbReference type="RefSeq" id="NP_863542.1">
    <property type="nucleotide sequence ID" value="NC_005017.1"/>
</dbReference>
<dbReference type="RefSeq" id="WP_005176483.1">
    <property type="nucleotide sequence ID" value="NZ_NWMR01000033.1"/>
</dbReference>
<dbReference type="SMR" id="Q01251"/>
<dbReference type="IntAct" id="Q01251">
    <property type="interactions" value="2"/>
</dbReference>
<dbReference type="MINT" id="Q01251"/>
<dbReference type="GeneID" id="31412279"/>
<dbReference type="OMA" id="SVFIRHD"/>
<dbReference type="GO" id="GO:0009279">
    <property type="term" value="C:cell outer membrane"/>
    <property type="evidence" value="ECO:0007669"/>
    <property type="project" value="UniProtKB-SubCell"/>
</dbReference>
<dbReference type="GO" id="GO:0009306">
    <property type="term" value="P:protein secretion"/>
    <property type="evidence" value="ECO:0007669"/>
    <property type="project" value="InterPro"/>
</dbReference>
<dbReference type="Gene3D" id="3.30.300.30">
    <property type="match status" value="1"/>
</dbReference>
<dbReference type="Gene3D" id="3.30.70.1530">
    <property type="entry name" value="Hypothetical protein rpa1041"/>
    <property type="match status" value="1"/>
</dbReference>
<dbReference type="InterPro" id="IPR045851">
    <property type="entry name" value="AMP-bd_C_sf"/>
</dbReference>
<dbReference type="InterPro" id="IPR006182">
    <property type="entry name" value="FliF_N_dom"/>
</dbReference>
<dbReference type="InterPro" id="IPR003282">
    <property type="entry name" value="T3SS_SctJ"/>
</dbReference>
<dbReference type="InterPro" id="IPR043427">
    <property type="entry name" value="YscJ/FliF"/>
</dbReference>
<dbReference type="NCBIfam" id="TIGR02544">
    <property type="entry name" value="III_secr_YscJ"/>
    <property type="match status" value="1"/>
</dbReference>
<dbReference type="PANTHER" id="PTHR30046">
    <property type="entry name" value="FLAGELLAR M-RING PROTEIN"/>
    <property type="match status" value="1"/>
</dbReference>
<dbReference type="PANTHER" id="PTHR30046:SF2">
    <property type="entry name" value="YOP PROTEINS TRANSLOCATION LIPOPROTEIN J"/>
    <property type="match status" value="1"/>
</dbReference>
<dbReference type="Pfam" id="PF01514">
    <property type="entry name" value="YscJ_FliF"/>
    <property type="match status" value="1"/>
</dbReference>
<dbReference type="PRINTS" id="PR01338">
    <property type="entry name" value="TYPE3OMKPROT"/>
</dbReference>
<dbReference type="PROSITE" id="PS51257">
    <property type="entry name" value="PROKAR_LIPOPROTEIN"/>
    <property type="match status" value="1"/>
</dbReference>
<geneLocation type="plasmid">
    <name>pYV</name>
</geneLocation>
<proteinExistence type="evidence at transcript level"/>
<keyword id="KW-0998">Cell outer membrane</keyword>
<keyword id="KW-0449">Lipoprotein</keyword>
<keyword id="KW-0472">Membrane</keyword>
<keyword id="KW-0564">Palmitate</keyword>
<keyword id="KW-0614">Plasmid</keyword>
<keyword id="KW-0653">Protein transport</keyword>
<keyword id="KW-0732">Signal</keyword>
<keyword id="KW-0812">Transmembrane</keyword>
<keyword id="KW-1133">Transmembrane helix</keyword>
<keyword id="KW-0813">Transport</keyword>
<keyword id="KW-0843">Virulence</keyword>
<comment type="function">
    <text>Required for the export process of the Yop proteins.</text>
</comment>
<comment type="subcellular location">
    <subcellularLocation>
        <location evidence="3">Cell outer membrane</location>
        <topology evidence="3">Lipid-anchor</topology>
    </subcellularLocation>
</comment>
<comment type="induction">
    <text>At 37 degrees Celsius in the absence of calcium.</text>
</comment>
<comment type="similarity">
    <text evidence="3">Belongs to the YscJ lipoprotein family.</text>
</comment>
<gene>
    <name type="primary">yscJ</name>
    <name type="synonym">ylpB</name>
</gene>